<sequence>MSRKPFIAGNWKMNKNPEEAKAFVEAVASKLPSADLVEAGIAVPAVDLTTVIAAAKGSNLKVAAQNTYFENSGAFTGETSPQVLKEIGTDYVVIGHSERRDYFHETDEDINKKAKAIFANGMIPIICCGESLETYEAGKAAEFVGAQVSAALAGLTPEQVASSVIAYEPIWAIGTGKSASQDDAQKMCKVVRDVVAADFGQEVADKVRVLYGGSVKPENVAEYMACPDVDGALVGGASLEPESFLALLDFVK</sequence>
<reference key="1">
    <citation type="journal article" date="2004" name="Nat. Biotechnol.">
        <title>Complete sequence and comparative genome analysis of the dairy bacterium Streptococcus thermophilus.</title>
        <authorList>
            <person name="Bolotin A."/>
            <person name="Quinquis B."/>
            <person name="Renault P."/>
            <person name="Sorokin A."/>
            <person name="Ehrlich S.D."/>
            <person name="Kulakauskas S."/>
            <person name="Lapidus A."/>
            <person name="Goltsman E."/>
            <person name="Mazur M."/>
            <person name="Pusch G.D."/>
            <person name="Fonstein M."/>
            <person name="Overbeek R."/>
            <person name="Kyprides N."/>
            <person name="Purnelle B."/>
            <person name="Prozzi D."/>
            <person name="Ngui K."/>
            <person name="Masuy D."/>
            <person name="Hancy F."/>
            <person name="Burteau S."/>
            <person name="Boutry M."/>
            <person name="Delcour J."/>
            <person name="Goffeau A."/>
            <person name="Hols P."/>
        </authorList>
    </citation>
    <scope>NUCLEOTIDE SEQUENCE [LARGE SCALE GENOMIC DNA]</scope>
    <source>
        <strain>CNRZ 1066</strain>
    </source>
</reference>
<dbReference type="EC" id="5.3.1.1" evidence="1"/>
<dbReference type="EMBL" id="CP000024">
    <property type="protein sequence ID" value="AAV62087.1"/>
    <property type="molecule type" value="Genomic_DNA"/>
</dbReference>
<dbReference type="RefSeq" id="WP_002946314.1">
    <property type="nucleotide sequence ID" value="NC_006449.1"/>
</dbReference>
<dbReference type="SMR" id="Q5M100"/>
<dbReference type="GeneID" id="66898398"/>
<dbReference type="KEGG" id="stc:str0488"/>
<dbReference type="HOGENOM" id="CLU_024251_2_3_9"/>
<dbReference type="UniPathway" id="UPA00109">
    <property type="reaction ID" value="UER00189"/>
</dbReference>
<dbReference type="UniPathway" id="UPA00138"/>
<dbReference type="GO" id="GO:0005829">
    <property type="term" value="C:cytosol"/>
    <property type="evidence" value="ECO:0007669"/>
    <property type="project" value="TreeGrafter"/>
</dbReference>
<dbReference type="GO" id="GO:0004807">
    <property type="term" value="F:triose-phosphate isomerase activity"/>
    <property type="evidence" value="ECO:0007669"/>
    <property type="project" value="UniProtKB-UniRule"/>
</dbReference>
<dbReference type="GO" id="GO:0006094">
    <property type="term" value="P:gluconeogenesis"/>
    <property type="evidence" value="ECO:0007669"/>
    <property type="project" value="UniProtKB-UniRule"/>
</dbReference>
<dbReference type="GO" id="GO:0046166">
    <property type="term" value="P:glyceraldehyde-3-phosphate biosynthetic process"/>
    <property type="evidence" value="ECO:0007669"/>
    <property type="project" value="TreeGrafter"/>
</dbReference>
<dbReference type="GO" id="GO:0019563">
    <property type="term" value="P:glycerol catabolic process"/>
    <property type="evidence" value="ECO:0007669"/>
    <property type="project" value="TreeGrafter"/>
</dbReference>
<dbReference type="GO" id="GO:0006096">
    <property type="term" value="P:glycolytic process"/>
    <property type="evidence" value="ECO:0007669"/>
    <property type="project" value="UniProtKB-UniRule"/>
</dbReference>
<dbReference type="CDD" id="cd00311">
    <property type="entry name" value="TIM"/>
    <property type="match status" value="1"/>
</dbReference>
<dbReference type="FunFam" id="3.20.20.70:FF:000016">
    <property type="entry name" value="Triosephosphate isomerase"/>
    <property type="match status" value="1"/>
</dbReference>
<dbReference type="Gene3D" id="3.20.20.70">
    <property type="entry name" value="Aldolase class I"/>
    <property type="match status" value="1"/>
</dbReference>
<dbReference type="HAMAP" id="MF_00147_B">
    <property type="entry name" value="TIM_B"/>
    <property type="match status" value="1"/>
</dbReference>
<dbReference type="InterPro" id="IPR013785">
    <property type="entry name" value="Aldolase_TIM"/>
</dbReference>
<dbReference type="InterPro" id="IPR035990">
    <property type="entry name" value="TIM_sf"/>
</dbReference>
<dbReference type="InterPro" id="IPR022896">
    <property type="entry name" value="TrioseP_Isoase_bac/euk"/>
</dbReference>
<dbReference type="InterPro" id="IPR000652">
    <property type="entry name" value="Triosephosphate_isomerase"/>
</dbReference>
<dbReference type="InterPro" id="IPR020861">
    <property type="entry name" value="Triosephosphate_isomerase_AS"/>
</dbReference>
<dbReference type="NCBIfam" id="TIGR00419">
    <property type="entry name" value="tim"/>
    <property type="match status" value="1"/>
</dbReference>
<dbReference type="PANTHER" id="PTHR21139">
    <property type="entry name" value="TRIOSEPHOSPHATE ISOMERASE"/>
    <property type="match status" value="1"/>
</dbReference>
<dbReference type="PANTHER" id="PTHR21139:SF42">
    <property type="entry name" value="TRIOSEPHOSPHATE ISOMERASE"/>
    <property type="match status" value="1"/>
</dbReference>
<dbReference type="Pfam" id="PF00121">
    <property type="entry name" value="TIM"/>
    <property type="match status" value="1"/>
</dbReference>
<dbReference type="SUPFAM" id="SSF51351">
    <property type="entry name" value="Triosephosphate isomerase (TIM)"/>
    <property type="match status" value="1"/>
</dbReference>
<dbReference type="PROSITE" id="PS00171">
    <property type="entry name" value="TIM_1"/>
    <property type="match status" value="1"/>
</dbReference>
<dbReference type="PROSITE" id="PS51440">
    <property type="entry name" value="TIM_2"/>
    <property type="match status" value="1"/>
</dbReference>
<gene>
    <name evidence="1" type="primary">tpiA</name>
    <name type="ordered locus">str0488</name>
</gene>
<feature type="chain" id="PRO_0000307582" description="Triosephosphate isomerase">
    <location>
        <begin position="1"/>
        <end position="252"/>
    </location>
</feature>
<feature type="active site" description="Electrophile" evidence="1">
    <location>
        <position position="96"/>
    </location>
</feature>
<feature type="active site" description="Proton acceptor" evidence="1">
    <location>
        <position position="168"/>
    </location>
</feature>
<feature type="binding site" evidence="1">
    <location>
        <begin position="10"/>
        <end position="12"/>
    </location>
    <ligand>
        <name>substrate</name>
    </ligand>
</feature>
<feature type="binding site" evidence="1">
    <location>
        <position position="174"/>
    </location>
    <ligand>
        <name>substrate</name>
    </ligand>
</feature>
<feature type="binding site" evidence="1">
    <location>
        <position position="214"/>
    </location>
    <ligand>
        <name>substrate</name>
    </ligand>
</feature>
<feature type="binding site" evidence="1">
    <location>
        <begin position="235"/>
        <end position="236"/>
    </location>
    <ligand>
        <name>substrate</name>
    </ligand>
</feature>
<evidence type="ECO:0000255" key="1">
    <source>
        <dbReference type="HAMAP-Rule" id="MF_00147"/>
    </source>
</evidence>
<organism>
    <name type="scientific">Streptococcus thermophilus (strain CNRZ 1066)</name>
    <dbReference type="NCBI Taxonomy" id="299768"/>
    <lineage>
        <taxon>Bacteria</taxon>
        <taxon>Bacillati</taxon>
        <taxon>Bacillota</taxon>
        <taxon>Bacilli</taxon>
        <taxon>Lactobacillales</taxon>
        <taxon>Streptococcaceae</taxon>
        <taxon>Streptococcus</taxon>
    </lineage>
</organism>
<accession>Q5M100</accession>
<comment type="function">
    <text evidence="1">Involved in the gluconeogenesis. Catalyzes stereospecifically the conversion of dihydroxyacetone phosphate (DHAP) to D-glyceraldehyde-3-phosphate (G3P).</text>
</comment>
<comment type="catalytic activity">
    <reaction evidence="1">
        <text>D-glyceraldehyde 3-phosphate = dihydroxyacetone phosphate</text>
        <dbReference type="Rhea" id="RHEA:18585"/>
        <dbReference type="ChEBI" id="CHEBI:57642"/>
        <dbReference type="ChEBI" id="CHEBI:59776"/>
        <dbReference type="EC" id="5.3.1.1"/>
    </reaction>
</comment>
<comment type="pathway">
    <text evidence="1">Carbohydrate biosynthesis; gluconeogenesis.</text>
</comment>
<comment type="pathway">
    <text evidence="1">Carbohydrate degradation; glycolysis; D-glyceraldehyde 3-phosphate from glycerone phosphate: step 1/1.</text>
</comment>
<comment type="subunit">
    <text evidence="1">Homodimer.</text>
</comment>
<comment type="subcellular location">
    <subcellularLocation>
        <location evidence="1">Cytoplasm</location>
    </subcellularLocation>
</comment>
<comment type="similarity">
    <text evidence="1">Belongs to the triosephosphate isomerase family.</text>
</comment>
<proteinExistence type="inferred from homology"/>
<name>TPIS_STRT1</name>
<keyword id="KW-0963">Cytoplasm</keyword>
<keyword id="KW-0312">Gluconeogenesis</keyword>
<keyword id="KW-0324">Glycolysis</keyword>
<keyword id="KW-0413">Isomerase</keyword>
<protein>
    <recommendedName>
        <fullName evidence="1">Triosephosphate isomerase</fullName>
        <shortName evidence="1">TIM</shortName>
        <shortName evidence="1">TPI</shortName>
        <ecNumber evidence="1">5.3.1.1</ecNumber>
    </recommendedName>
    <alternativeName>
        <fullName evidence="1">Triose-phosphate isomerase</fullName>
    </alternativeName>
</protein>